<name>SYS_LACLA</name>
<dbReference type="EC" id="6.1.1.11" evidence="1"/>
<dbReference type="EMBL" id="AE005176">
    <property type="protein sequence ID" value="AAK05810.1"/>
    <property type="molecule type" value="Genomic_DNA"/>
</dbReference>
<dbReference type="PIR" id="H86838">
    <property type="entry name" value="H86838"/>
</dbReference>
<dbReference type="RefSeq" id="NP_267868.1">
    <property type="nucleotide sequence ID" value="NC_002662.1"/>
</dbReference>
<dbReference type="RefSeq" id="WP_003130891.1">
    <property type="nucleotide sequence ID" value="NC_002662.1"/>
</dbReference>
<dbReference type="SMR" id="Q9CEX2"/>
<dbReference type="PaxDb" id="272623-L150515"/>
<dbReference type="EnsemblBacteria" id="AAK05810">
    <property type="protein sequence ID" value="AAK05810"/>
    <property type="gene ID" value="L150515"/>
</dbReference>
<dbReference type="GeneID" id="89633913"/>
<dbReference type="KEGG" id="lla:L150515"/>
<dbReference type="PATRIC" id="fig|272623.7.peg.1836"/>
<dbReference type="eggNOG" id="COG0172">
    <property type="taxonomic scope" value="Bacteria"/>
</dbReference>
<dbReference type="HOGENOM" id="CLU_023797_1_1_9"/>
<dbReference type="OrthoDB" id="9804647at2"/>
<dbReference type="UniPathway" id="UPA00906">
    <property type="reaction ID" value="UER00895"/>
</dbReference>
<dbReference type="Proteomes" id="UP000002196">
    <property type="component" value="Chromosome"/>
</dbReference>
<dbReference type="GO" id="GO:0005737">
    <property type="term" value="C:cytoplasm"/>
    <property type="evidence" value="ECO:0007669"/>
    <property type="project" value="UniProtKB-SubCell"/>
</dbReference>
<dbReference type="GO" id="GO:0005524">
    <property type="term" value="F:ATP binding"/>
    <property type="evidence" value="ECO:0007669"/>
    <property type="project" value="UniProtKB-UniRule"/>
</dbReference>
<dbReference type="GO" id="GO:0140096">
    <property type="term" value="F:catalytic activity, acting on a protein"/>
    <property type="evidence" value="ECO:0007669"/>
    <property type="project" value="UniProtKB-ARBA"/>
</dbReference>
<dbReference type="GO" id="GO:0004828">
    <property type="term" value="F:serine-tRNA ligase activity"/>
    <property type="evidence" value="ECO:0007669"/>
    <property type="project" value="UniProtKB-UniRule"/>
</dbReference>
<dbReference type="GO" id="GO:0016740">
    <property type="term" value="F:transferase activity"/>
    <property type="evidence" value="ECO:0007669"/>
    <property type="project" value="UniProtKB-ARBA"/>
</dbReference>
<dbReference type="GO" id="GO:0016260">
    <property type="term" value="P:selenocysteine biosynthetic process"/>
    <property type="evidence" value="ECO:0007669"/>
    <property type="project" value="UniProtKB-UniRule"/>
</dbReference>
<dbReference type="GO" id="GO:0006434">
    <property type="term" value="P:seryl-tRNA aminoacylation"/>
    <property type="evidence" value="ECO:0007669"/>
    <property type="project" value="UniProtKB-UniRule"/>
</dbReference>
<dbReference type="CDD" id="cd00770">
    <property type="entry name" value="SerRS_core"/>
    <property type="match status" value="1"/>
</dbReference>
<dbReference type="Gene3D" id="3.30.930.10">
    <property type="entry name" value="Bira Bifunctional Protein, Domain 2"/>
    <property type="match status" value="1"/>
</dbReference>
<dbReference type="Gene3D" id="1.10.287.40">
    <property type="entry name" value="Serine-tRNA synthetase, tRNA binding domain"/>
    <property type="match status" value="1"/>
</dbReference>
<dbReference type="HAMAP" id="MF_00176">
    <property type="entry name" value="Ser_tRNA_synth_type1"/>
    <property type="match status" value="1"/>
</dbReference>
<dbReference type="InterPro" id="IPR002314">
    <property type="entry name" value="aa-tRNA-synt_IIb"/>
</dbReference>
<dbReference type="InterPro" id="IPR006195">
    <property type="entry name" value="aa-tRNA-synth_II"/>
</dbReference>
<dbReference type="InterPro" id="IPR045864">
    <property type="entry name" value="aa-tRNA-synth_II/BPL/LPL"/>
</dbReference>
<dbReference type="InterPro" id="IPR002317">
    <property type="entry name" value="Ser-tRNA-ligase_type_1"/>
</dbReference>
<dbReference type="InterPro" id="IPR015866">
    <property type="entry name" value="Ser-tRNA-synth_1_N"/>
</dbReference>
<dbReference type="InterPro" id="IPR042103">
    <property type="entry name" value="SerRS_1_N_sf"/>
</dbReference>
<dbReference type="InterPro" id="IPR033729">
    <property type="entry name" value="SerRS_core"/>
</dbReference>
<dbReference type="InterPro" id="IPR010978">
    <property type="entry name" value="tRNA-bd_arm"/>
</dbReference>
<dbReference type="NCBIfam" id="TIGR00414">
    <property type="entry name" value="serS"/>
    <property type="match status" value="1"/>
</dbReference>
<dbReference type="PANTHER" id="PTHR43697:SF1">
    <property type="entry name" value="SERINE--TRNA LIGASE"/>
    <property type="match status" value="1"/>
</dbReference>
<dbReference type="PANTHER" id="PTHR43697">
    <property type="entry name" value="SERYL-TRNA SYNTHETASE"/>
    <property type="match status" value="1"/>
</dbReference>
<dbReference type="Pfam" id="PF02403">
    <property type="entry name" value="Seryl_tRNA_N"/>
    <property type="match status" value="1"/>
</dbReference>
<dbReference type="Pfam" id="PF00587">
    <property type="entry name" value="tRNA-synt_2b"/>
    <property type="match status" value="1"/>
</dbReference>
<dbReference type="PIRSF" id="PIRSF001529">
    <property type="entry name" value="Ser-tRNA-synth_IIa"/>
    <property type="match status" value="1"/>
</dbReference>
<dbReference type="PRINTS" id="PR00981">
    <property type="entry name" value="TRNASYNTHSER"/>
</dbReference>
<dbReference type="SUPFAM" id="SSF55681">
    <property type="entry name" value="Class II aaRS and biotin synthetases"/>
    <property type="match status" value="1"/>
</dbReference>
<dbReference type="SUPFAM" id="SSF46589">
    <property type="entry name" value="tRNA-binding arm"/>
    <property type="match status" value="1"/>
</dbReference>
<dbReference type="PROSITE" id="PS50862">
    <property type="entry name" value="AA_TRNA_LIGASE_II"/>
    <property type="match status" value="1"/>
</dbReference>
<evidence type="ECO:0000255" key="1">
    <source>
        <dbReference type="HAMAP-Rule" id="MF_00176"/>
    </source>
</evidence>
<organism>
    <name type="scientific">Lactococcus lactis subsp. lactis (strain IL1403)</name>
    <name type="common">Streptococcus lactis</name>
    <dbReference type="NCBI Taxonomy" id="272623"/>
    <lineage>
        <taxon>Bacteria</taxon>
        <taxon>Bacillati</taxon>
        <taxon>Bacillota</taxon>
        <taxon>Bacilli</taxon>
        <taxon>Lactobacillales</taxon>
        <taxon>Streptococcaceae</taxon>
        <taxon>Lactococcus</taxon>
    </lineage>
</organism>
<accession>Q9CEX2</accession>
<reference key="1">
    <citation type="journal article" date="2001" name="Genome Res.">
        <title>The complete genome sequence of the lactic acid bacterium Lactococcus lactis ssp. lactis IL1403.</title>
        <authorList>
            <person name="Bolotin A."/>
            <person name="Wincker P."/>
            <person name="Mauger S."/>
            <person name="Jaillon O."/>
            <person name="Malarme K."/>
            <person name="Weissenbach J."/>
            <person name="Ehrlich S.D."/>
            <person name="Sorokin A."/>
        </authorList>
    </citation>
    <scope>NUCLEOTIDE SEQUENCE [LARGE SCALE GENOMIC DNA]</scope>
    <source>
        <strain>IL1403</strain>
    </source>
</reference>
<protein>
    <recommendedName>
        <fullName evidence="1">Serine--tRNA ligase</fullName>
        <ecNumber evidence="1">6.1.1.11</ecNumber>
    </recommendedName>
    <alternativeName>
        <fullName evidence="1">Seryl-tRNA synthetase</fullName>
        <shortName evidence="1">SerRS</shortName>
    </alternativeName>
    <alternativeName>
        <fullName evidence="1">Seryl-tRNA(Ser/Sec) synthetase</fullName>
    </alternativeName>
</protein>
<sequence length="423" mass="47469">MLDIKKIRADFDGVAAKLATRGVEKEKLEKLHDLDIKRRELIVKSEALKAERNSVSDEISQVKRAKGDASAQIAAMQKVSAEIKAIDAELAEIEENLNEIIIMLPNLPHESTPIGADEDDNVEVRRVGQTPTFNFEPKAHWDLGEDLGILDWERGGKVTGSRFLFYKGAGARLERALYNFMLDEHGKEGYTEMITPYMVNQESMFGTGQYPKFKEDTFELKDDRGFVLIPTAEVPLTNYYRGEILDGAELPIKFTAMSPSFRSEAGSAGRDTRGLIRLHQFHKVEMVKFAKPDQSYDELEKMTANAENILQKLGLAYRVVALSTGDMGFSAAKTYDLEVWIPAQNTYREISSCSNCEDFQARRAQIRYRDEEGKVQLLHTLNGSGLAVGRTVAAILENYQNEDGSITVPEVLRPYMGGLEVIK</sequence>
<feature type="chain" id="PRO_0000122064" description="Serine--tRNA ligase">
    <location>
        <begin position="1"/>
        <end position="423"/>
    </location>
</feature>
<feature type="binding site" evidence="1">
    <location>
        <begin position="231"/>
        <end position="233"/>
    </location>
    <ligand>
        <name>L-serine</name>
        <dbReference type="ChEBI" id="CHEBI:33384"/>
    </ligand>
</feature>
<feature type="binding site" evidence="1">
    <location>
        <begin position="262"/>
        <end position="264"/>
    </location>
    <ligand>
        <name>ATP</name>
        <dbReference type="ChEBI" id="CHEBI:30616"/>
    </ligand>
</feature>
<feature type="binding site" evidence="1">
    <location>
        <position position="285"/>
    </location>
    <ligand>
        <name>L-serine</name>
        <dbReference type="ChEBI" id="CHEBI:33384"/>
    </ligand>
</feature>
<feature type="binding site" evidence="1">
    <location>
        <begin position="349"/>
        <end position="352"/>
    </location>
    <ligand>
        <name>ATP</name>
        <dbReference type="ChEBI" id="CHEBI:30616"/>
    </ligand>
</feature>
<feature type="binding site" evidence="1">
    <location>
        <position position="384"/>
    </location>
    <ligand>
        <name>L-serine</name>
        <dbReference type="ChEBI" id="CHEBI:33384"/>
    </ligand>
</feature>
<keyword id="KW-0030">Aminoacyl-tRNA synthetase</keyword>
<keyword id="KW-0067">ATP-binding</keyword>
<keyword id="KW-0963">Cytoplasm</keyword>
<keyword id="KW-0436">Ligase</keyword>
<keyword id="KW-0547">Nucleotide-binding</keyword>
<keyword id="KW-0648">Protein biosynthesis</keyword>
<keyword id="KW-1185">Reference proteome</keyword>
<gene>
    <name evidence="1" type="primary">serS</name>
    <name type="ordered locus">LL1712</name>
    <name type="ORF">L150515</name>
</gene>
<comment type="function">
    <text evidence="1">Catalyzes the attachment of serine to tRNA(Ser). Is also able to aminoacylate tRNA(Sec) with serine, to form the misacylated tRNA L-seryl-tRNA(Sec), which will be further converted into selenocysteinyl-tRNA(Sec).</text>
</comment>
<comment type="catalytic activity">
    <reaction evidence="1">
        <text>tRNA(Ser) + L-serine + ATP = L-seryl-tRNA(Ser) + AMP + diphosphate + H(+)</text>
        <dbReference type="Rhea" id="RHEA:12292"/>
        <dbReference type="Rhea" id="RHEA-COMP:9669"/>
        <dbReference type="Rhea" id="RHEA-COMP:9703"/>
        <dbReference type="ChEBI" id="CHEBI:15378"/>
        <dbReference type="ChEBI" id="CHEBI:30616"/>
        <dbReference type="ChEBI" id="CHEBI:33019"/>
        <dbReference type="ChEBI" id="CHEBI:33384"/>
        <dbReference type="ChEBI" id="CHEBI:78442"/>
        <dbReference type="ChEBI" id="CHEBI:78533"/>
        <dbReference type="ChEBI" id="CHEBI:456215"/>
        <dbReference type="EC" id="6.1.1.11"/>
    </reaction>
</comment>
<comment type="catalytic activity">
    <reaction evidence="1">
        <text>tRNA(Sec) + L-serine + ATP = L-seryl-tRNA(Sec) + AMP + diphosphate + H(+)</text>
        <dbReference type="Rhea" id="RHEA:42580"/>
        <dbReference type="Rhea" id="RHEA-COMP:9742"/>
        <dbReference type="Rhea" id="RHEA-COMP:10128"/>
        <dbReference type="ChEBI" id="CHEBI:15378"/>
        <dbReference type="ChEBI" id="CHEBI:30616"/>
        <dbReference type="ChEBI" id="CHEBI:33019"/>
        <dbReference type="ChEBI" id="CHEBI:33384"/>
        <dbReference type="ChEBI" id="CHEBI:78442"/>
        <dbReference type="ChEBI" id="CHEBI:78533"/>
        <dbReference type="ChEBI" id="CHEBI:456215"/>
        <dbReference type="EC" id="6.1.1.11"/>
    </reaction>
</comment>
<comment type="pathway">
    <text evidence="1">Aminoacyl-tRNA biosynthesis; selenocysteinyl-tRNA(Sec) biosynthesis; L-seryl-tRNA(Sec) from L-serine and tRNA(Sec): step 1/1.</text>
</comment>
<comment type="subunit">
    <text evidence="1">Homodimer. The tRNA molecule binds across the dimer.</text>
</comment>
<comment type="subcellular location">
    <subcellularLocation>
        <location evidence="1">Cytoplasm</location>
    </subcellularLocation>
</comment>
<comment type="domain">
    <text evidence="1">Consists of two distinct domains, a catalytic core and a N-terminal extension that is involved in tRNA binding.</text>
</comment>
<comment type="similarity">
    <text evidence="1">Belongs to the class-II aminoacyl-tRNA synthetase family. Type-1 seryl-tRNA synthetase subfamily.</text>
</comment>
<proteinExistence type="inferred from homology"/>